<evidence type="ECO:0000250" key="1">
    <source>
        <dbReference type="UniProtKB" id="P30084"/>
    </source>
</evidence>
<evidence type="ECO:0000250" key="2">
    <source>
        <dbReference type="UniProtKB" id="Q8BH95"/>
    </source>
</evidence>
<evidence type="ECO:0000269" key="3">
    <source>
    </source>
</evidence>
<evidence type="ECO:0000269" key="4">
    <source>
    </source>
</evidence>
<evidence type="ECO:0000269" key="5">
    <source>
    </source>
</evidence>
<evidence type="ECO:0000269" key="6">
    <source>
    </source>
</evidence>
<evidence type="ECO:0000269" key="7">
    <source>
    </source>
</evidence>
<evidence type="ECO:0000269" key="8">
    <source>
    </source>
</evidence>
<evidence type="ECO:0000269" key="9">
    <source>
    </source>
</evidence>
<evidence type="ECO:0000303" key="10">
    <source>
    </source>
</evidence>
<evidence type="ECO:0000305" key="11"/>
<evidence type="ECO:0000305" key="12">
    <source>
    </source>
</evidence>
<evidence type="ECO:0000305" key="13">
    <source>
    </source>
</evidence>
<evidence type="ECO:0000312" key="14">
    <source>
        <dbReference type="RGD" id="69330"/>
    </source>
</evidence>
<evidence type="ECO:0007829" key="15">
    <source>
        <dbReference type="PDB" id="1MJ3"/>
    </source>
</evidence>
<evidence type="ECO:0007829" key="16">
    <source>
        <dbReference type="PDB" id="2DUB"/>
    </source>
</evidence>
<protein>
    <recommendedName>
        <fullName evidence="11">Enoyl-CoA hydratase, mitochondrial</fullName>
        <shortName evidence="10">mECH</shortName>
        <shortName evidence="10">mECH1</shortName>
        <ecNumber evidence="3 7">4.2.1.17</ecNumber>
        <ecNumber evidence="3">5.3.3.8</ecNumber>
    </recommendedName>
    <alternativeName>
        <fullName>Enoyl-CoA hydratase 1</fullName>
        <shortName>ECHS1</shortName>
    </alternativeName>
    <alternativeName>
        <fullName>Short-chain enoyl-CoA hydratase</fullName>
        <shortName>SCEH</shortName>
    </alternativeName>
</protein>
<dbReference type="EC" id="4.2.1.17" evidence="3 7"/>
<dbReference type="EC" id="5.3.3.8" evidence="3"/>
<dbReference type="EMBL" id="X15958">
    <property type="protein sequence ID" value="CAA34080.1"/>
    <property type="molecule type" value="mRNA"/>
</dbReference>
<dbReference type="EMBL" id="BC064655">
    <property type="protein sequence ID" value="AAH64655.1"/>
    <property type="molecule type" value="mRNA"/>
</dbReference>
<dbReference type="PIR" id="S06477">
    <property type="entry name" value="S06477"/>
</dbReference>
<dbReference type="RefSeq" id="NP_511178.1">
    <property type="nucleotide sequence ID" value="NM_078623.2"/>
</dbReference>
<dbReference type="RefSeq" id="XP_003748934.1">
    <property type="nucleotide sequence ID" value="XM_003748886.3"/>
</dbReference>
<dbReference type="PDB" id="1DUB">
    <property type="method" value="X-ray"/>
    <property type="resolution" value="2.50 A"/>
    <property type="chains" value="A/B/C/D/E/F=30-290"/>
</dbReference>
<dbReference type="PDB" id="1EY3">
    <property type="method" value="X-ray"/>
    <property type="resolution" value="2.30 A"/>
    <property type="chains" value="A/B/C/D/E/F=33-290"/>
</dbReference>
<dbReference type="PDB" id="1MJ3">
    <property type="method" value="X-ray"/>
    <property type="resolution" value="2.10 A"/>
    <property type="chains" value="A/B/C/D/E/F=31-290"/>
</dbReference>
<dbReference type="PDB" id="2DUB">
    <property type="method" value="X-ray"/>
    <property type="resolution" value="2.40 A"/>
    <property type="chains" value="A/B/C/D/E/F=30-290"/>
</dbReference>
<dbReference type="PDBsum" id="1DUB"/>
<dbReference type="PDBsum" id="1EY3"/>
<dbReference type="PDBsum" id="1MJ3"/>
<dbReference type="PDBsum" id="2DUB"/>
<dbReference type="SMR" id="P14604"/>
<dbReference type="BioGRID" id="250789">
    <property type="interactions" value="1"/>
</dbReference>
<dbReference type="FunCoup" id="P14604">
    <property type="interactions" value="1428"/>
</dbReference>
<dbReference type="IntAct" id="P14604">
    <property type="interactions" value="9"/>
</dbReference>
<dbReference type="STRING" id="10116.ENSRNOP00000025446"/>
<dbReference type="ChEMBL" id="CHEMBL3153"/>
<dbReference type="SwissLipids" id="SLP:000001128"/>
<dbReference type="GlyGen" id="P14604">
    <property type="glycosylation" value="3 sites, 1 O-linked glycan (3 sites)"/>
</dbReference>
<dbReference type="iPTMnet" id="P14604"/>
<dbReference type="PhosphoSitePlus" id="P14604"/>
<dbReference type="jPOST" id="P14604"/>
<dbReference type="PaxDb" id="10116-ENSRNOP00000025446"/>
<dbReference type="Ensembl" id="ENSRNOT00000071574.3">
    <property type="protein sequence ID" value="ENSRNOP00000066388.1"/>
    <property type="gene ID" value="ENSRNOG00000064647.1"/>
</dbReference>
<dbReference type="GeneID" id="140547"/>
<dbReference type="KEGG" id="rno:140547"/>
<dbReference type="UCSC" id="RGD:69330">
    <property type="organism name" value="rat"/>
</dbReference>
<dbReference type="AGR" id="RGD:69330"/>
<dbReference type="CTD" id="1892"/>
<dbReference type="RGD" id="69330">
    <property type="gene designation" value="Echs1"/>
</dbReference>
<dbReference type="eggNOG" id="KOG1680">
    <property type="taxonomic scope" value="Eukaryota"/>
</dbReference>
<dbReference type="GeneTree" id="ENSGT00940000157609"/>
<dbReference type="HOGENOM" id="CLU_009834_7_6_1"/>
<dbReference type="InParanoid" id="P14604"/>
<dbReference type="OMA" id="FCDARED"/>
<dbReference type="OrthoDB" id="2018133at2759"/>
<dbReference type="PhylomeDB" id="P14604"/>
<dbReference type="TreeFam" id="TF314497"/>
<dbReference type="BRENDA" id="4.2.1.17">
    <property type="organism ID" value="5301"/>
</dbReference>
<dbReference type="BRENDA" id="5.3.3.21">
    <property type="organism ID" value="5301"/>
</dbReference>
<dbReference type="Reactome" id="R-RNO-70895">
    <property type="pathway name" value="Branched-chain amino acid catabolism"/>
</dbReference>
<dbReference type="Reactome" id="R-RNO-77310">
    <property type="pathway name" value="Beta oxidation of lauroyl-CoA to decanoyl-CoA-CoA"/>
</dbReference>
<dbReference type="Reactome" id="R-RNO-77346">
    <property type="pathway name" value="Beta oxidation of decanoyl-CoA to octanoyl-CoA-CoA"/>
</dbReference>
<dbReference type="Reactome" id="R-RNO-77348">
    <property type="pathway name" value="Beta oxidation of octanoyl-CoA to hexanoyl-CoA"/>
</dbReference>
<dbReference type="Reactome" id="R-RNO-77350">
    <property type="pathway name" value="Beta oxidation of hexanoyl-CoA to butanoyl-CoA"/>
</dbReference>
<dbReference type="Reactome" id="R-RNO-77352">
    <property type="pathway name" value="Beta oxidation of butanoyl-CoA to acetyl-CoA"/>
</dbReference>
<dbReference type="UniPathway" id="UPA00659"/>
<dbReference type="EvolutionaryTrace" id="P14604"/>
<dbReference type="PRO" id="PR:P14604"/>
<dbReference type="Proteomes" id="UP000002494">
    <property type="component" value="Chromosome 1"/>
</dbReference>
<dbReference type="Bgee" id="ENSRNOG00000018522">
    <property type="expression patterns" value="Expressed in heart and 19 other cell types or tissues"/>
</dbReference>
<dbReference type="GO" id="GO:0005759">
    <property type="term" value="C:mitochondrial matrix"/>
    <property type="evidence" value="ECO:0007669"/>
    <property type="project" value="UniProtKB-SubCell"/>
</dbReference>
<dbReference type="GO" id="GO:0005739">
    <property type="term" value="C:mitochondrion"/>
    <property type="evidence" value="ECO:0000318"/>
    <property type="project" value="GO_Central"/>
</dbReference>
<dbReference type="GO" id="GO:0043956">
    <property type="term" value="F:3-hydroxypropionyl-CoA dehydratase activity"/>
    <property type="evidence" value="ECO:0000266"/>
    <property type="project" value="RGD"/>
</dbReference>
<dbReference type="GO" id="GO:0120092">
    <property type="term" value="F:crotonyl-CoA hydratase activity"/>
    <property type="evidence" value="ECO:0007669"/>
    <property type="project" value="RHEA"/>
</dbReference>
<dbReference type="GO" id="GO:0004165">
    <property type="term" value="F:delta(3)-delta(2)-enoyl-CoA isomerase activity"/>
    <property type="evidence" value="ECO:0007669"/>
    <property type="project" value="RHEA"/>
</dbReference>
<dbReference type="GO" id="GO:0004300">
    <property type="term" value="F:enoyl-CoA hydratase activity"/>
    <property type="evidence" value="ECO:0000314"/>
    <property type="project" value="RGD"/>
</dbReference>
<dbReference type="GO" id="GO:0006635">
    <property type="term" value="P:fatty acid beta-oxidation"/>
    <property type="evidence" value="ECO:0000315"/>
    <property type="project" value="RGD"/>
</dbReference>
<dbReference type="CDD" id="cd06558">
    <property type="entry name" value="crotonase-like"/>
    <property type="match status" value="1"/>
</dbReference>
<dbReference type="FunFam" id="3.90.226.10:FF:000213">
    <property type="entry name" value="Enoyl-CoA hydratase, mitochondrial"/>
    <property type="match status" value="1"/>
</dbReference>
<dbReference type="FunFam" id="1.10.12.10:FF:000001">
    <property type="entry name" value="Probable enoyl-CoA hydratase, mitochondrial"/>
    <property type="match status" value="1"/>
</dbReference>
<dbReference type="Gene3D" id="3.90.226.10">
    <property type="entry name" value="2-enoyl-CoA Hydratase, Chain A, domain 1"/>
    <property type="match status" value="1"/>
</dbReference>
<dbReference type="Gene3D" id="1.10.12.10">
    <property type="entry name" value="Lyase 2-enoyl-coa Hydratase, Chain A, domain 2"/>
    <property type="match status" value="1"/>
</dbReference>
<dbReference type="InterPro" id="IPR029045">
    <property type="entry name" value="ClpP/crotonase-like_dom_sf"/>
</dbReference>
<dbReference type="InterPro" id="IPR018376">
    <property type="entry name" value="Enoyl-CoA_hyd/isom_CS"/>
</dbReference>
<dbReference type="InterPro" id="IPR001753">
    <property type="entry name" value="Enoyl-CoA_hydra/iso"/>
</dbReference>
<dbReference type="InterPro" id="IPR014748">
    <property type="entry name" value="Enoyl-CoA_hydra_C"/>
</dbReference>
<dbReference type="PANTHER" id="PTHR11941:SF54">
    <property type="entry name" value="ENOYL-COA HYDRATASE, MITOCHONDRIAL"/>
    <property type="match status" value="1"/>
</dbReference>
<dbReference type="PANTHER" id="PTHR11941">
    <property type="entry name" value="ENOYL-COA HYDRATASE-RELATED"/>
    <property type="match status" value="1"/>
</dbReference>
<dbReference type="Pfam" id="PF00378">
    <property type="entry name" value="ECH_1"/>
    <property type="match status" value="1"/>
</dbReference>
<dbReference type="SUPFAM" id="SSF52096">
    <property type="entry name" value="ClpP/crotonase"/>
    <property type="match status" value="1"/>
</dbReference>
<dbReference type="PROSITE" id="PS00166">
    <property type="entry name" value="ENOYL_COA_HYDRATASE"/>
    <property type="match status" value="1"/>
</dbReference>
<gene>
    <name evidence="14" type="primary">Echs1</name>
</gene>
<reference key="1">
    <citation type="journal article" date="1989" name="Eur. J. Biochem.">
        <title>Molecular cloning and sequence analysis of the cDNA for rat mitochondrial enoyl-CoA hydratase. Structural and evolutionary relationships linked to the bifunctional enzyme of the peroxisomal beta-oxidation system.</title>
        <authorList>
            <person name="Minami-Ishii N."/>
            <person name="Taketani S."/>
            <person name="Osumi T."/>
            <person name="Hashimoto T."/>
        </authorList>
    </citation>
    <scope>NUCLEOTIDE SEQUENCE [MRNA]</scope>
    <scope>PROTEIN SEQUENCE OF 30-39 AND 80-94</scope>
    <source>
        <tissue>Liver</tissue>
    </source>
</reference>
<reference key="2">
    <citation type="journal article" date="2004" name="Genome Res.">
        <title>The status, quality, and expansion of the NIH full-length cDNA project: the Mammalian Gene Collection (MGC).</title>
        <authorList>
            <consortium name="The MGC Project Team"/>
        </authorList>
    </citation>
    <scope>NUCLEOTIDE SEQUENCE [LARGE SCALE MRNA]</scope>
    <source>
        <tissue>Prostate</tissue>
    </source>
</reference>
<reference key="3">
    <citation type="journal article" date="1995" name="Eur. J. Biochem.">
        <title>Enoyl-CoA hydratase and isomerase form a superfamily with a common active-site glutamate residue.</title>
        <authorList>
            <person name="Mueller-Newen G."/>
            <person name="Janssen U."/>
            <person name="Stoffel W."/>
        </authorList>
    </citation>
    <scope>MUTAGENESIS OF GLU-164</scope>
    <scope>CATALYTIC ACTIVITY</scope>
    <scope>FUNCTION</scope>
</reference>
<reference key="4">
    <citation type="journal article" date="1999" name="Biochemistry">
        <title>Mutagenic and enzymological studies of the hydratase and isomerase activities of 2-enoyl-CoA hydratase-1.</title>
        <authorList>
            <person name="Kiema T.R."/>
            <person name="Engel C.K."/>
            <person name="Schmitz W."/>
            <person name="Filppula S.A."/>
            <person name="Wierenga R.K."/>
            <person name="Hiltunen J.K."/>
        </authorList>
    </citation>
    <scope>FUNCTION</scope>
    <scope>CATALYTIC ACTIVITY</scope>
    <scope>BIOPHYSICOCHEMICAL PROPERTIES</scope>
</reference>
<reference key="5">
    <citation type="journal article" date="1996" name="EMBO J.">
        <title>Crystal structure of enoyl-coenzyme A (CoA) hydratase at 2.5-A resolution: a spiral fold defines the CoA-binding pocket.</title>
        <authorList>
            <person name="Engel C.K."/>
            <person name="Mathieu M."/>
            <person name="Zeelen J.P."/>
            <person name="Hiltunen J.K."/>
            <person name="Wierenga R.K."/>
        </authorList>
    </citation>
    <scope>X-RAY CRYSTALLOGRAPHY (2.5 ANGSTROMS) IN COMPLEX WITH OCTANOYL COENZYME A</scope>
    <scope>SUBUNIT</scope>
    <source>
        <tissue>Liver</tissue>
    </source>
</reference>
<reference key="6">
    <citation type="journal article" date="1998" name="J. Mol. Biol.">
        <title>The crystal structure of enoyl-CoA hydratase complexed with octanoyl-CoA reveals the structural adaptations required for binding of a long chain fatty acid-CoA molecule.</title>
        <authorList>
            <person name="Engel C.K."/>
            <person name="Kiema T.R."/>
            <person name="Hiltunen J.K."/>
            <person name="Wierenga R.K."/>
        </authorList>
    </citation>
    <scope>X-RAY CRYSTALLOGRAPHY (2.4 ANGSTROMS) IN COMPLEX WITH ACETOACETYL COENZYME A</scope>
    <scope>SUBUNIT</scope>
    <scope>SUBCELLULAR LOCATION</scope>
    <scope>TISSUE SPECIFICITY</scope>
</reference>
<reference key="7">
    <citation type="journal article" date="2002" name="Biochemistry">
        <title>Structural mechanism of enoyl-CoA hydratase: three atoms from a single water are added in either an E1cb stepwise or concerted fashion.</title>
        <authorList>
            <person name="Bahnson B.J."/>
            <person name="Anderson V.E."/>
            <person name="Petsko G.A."/>
        </authorList>
    </citation>
    <scope>X-RAY CRYSTALLOGRAPHY (2.3 ANGSTROMS) OF 33-290 IN COMPLEX WITH 4-N,N-DIMETHYLAMINOCINNAMOYL COENZYME A</scope>
    <scope>ENZYME MECHANISM</scope>
    <scope>SUBUNIT</scope>
</reference>
<reference key="8">
    <citation type="journal article" date="2002" name="Chem. Biol.">
        <title>Stereoselectivity of enoyl-CoA hydratase results from preferential activation of one of two bound substrate conformers.</title>
        <authorList>
            <person name="Bell A.F."/>
            <person name="Feng Y."/>
            <person name="Hofstein H.A."/>
            <person name="Parikh S."/>
            <person name="Wu J."/>
            <person name="Rudolph M.J."/>
            <person name="Kisker C."/>
            <person name="Whitty A."/>
            <person name="Tonge P.J."/>
        </authorList>
    </citation>
    <scope>X-RAY CRYSTALLOGRAPHY (2.1 ANGSTROMS) OF 31-290 IN COMPLEX WITH HEXADIENOL COENZYME A</scope>
    <scope>MUTAGENESIS OF GLU-144</scope>
</reference>
<feature type="transit peptide" description="Mitochondrion" evidence="6">
    <location>
        <begin position="1"/>
        <end position="29"/>
    </location>
</feature>
<feature type="chain" id="PRO_0000007414" description="Enoyl-CoA hydratase, mitochondrial">
    <location>
        <begin position="30"/>
        <end position="290"/>
    </location>
</feature>
<feature type="binding site">
    <location>
        <begin position="98"/>
        <end position="101"/>
    </location>
    <ligand>
        <name>substrate</name>
    </ligand>
</feature>
<feature type="binding site">
    <location>
        <position position="141"/>
    </location>
    <ligand>
        <name>substrate</name>
    </ligand>
</feature>
<feature type="site" description="Important for catalytic activity">
    <location>
        <position position="164"/>
    </location>
</feature>
<feature type="modified residue" description="N6-acetyllysine; alternate" evidence="2">
    <location>
        <position position="101"/>
    </location>
</feature>
<feature type="modified residue" description="N6-succinyllysine; alternate" evidence="2">
    <location>
        <position position="101"/>
    </location>
</feature>
<feature type="modified residue" description="N6-acetyllysine; alternate" evidence="2">
    <location>
        <position position="115"/>
    </location>
</feature>
<feature type="modified residue" description="N6-succinyllysine; alternate" evidence="2">
    <location>
        <position position="115"/>
    </location>
</feature>
<feature type="modified residue" description="N6-succinyllysine" evidence="2">
    <location>
        <position position="204"/>
    </location>
</feature>
<feature type="modified residue" description="N6-acetyllysine" evidence="2">
    <location>
        <position position="211"/>
    </location>
</feature>
<feature type="mutagenesis site" description="Reduces activity 50-fold." evidence="5">
    <original>E</original>
    <variation>D</variation>
    <location>
        <position position="144"/>
    </location>
</feature>
<feature type="mutagenesis site" description="Reduces activity 3300-fold." evidence="5">
    <original>E</original>
    <variation>Q</variation>
    <location>
        <position position="144"/>
    </location>
</feature>
<feature type="mutagenesis site" description="Reduces activity 1250-fold." evidence="7">
    <original>E</original>
    <variation>D</variation>
    <location>
        <position position="164"/>
    </location>
</feature>
<feature type="mutagenesis site" description="Reduces activity 330000-fold." evidence="7">
    <original>E</original>
    <variation>Q</variation>
    <location>
        <position position="164"/>
    </location>
</feature>
<feature type="strand" evidence="15">
    <location>
        <begin position="34"/>
        <end position="42"/>
    </location>
</feature>
<feature type="helix" evidence="15">
    <location>
        <begin position="43"/>
        <end position="45"/>
    </location>
</feature>
<feature type="strand" evidence="15">
    <location>
        <begin position="47"/>
        <end position="52"/>
    </location>
</feature>
<feature type="helix" evidence="15">
    <location>
        <begin position="55"/>
        <end position="57"/>
    </location>
</feature>
<feature type="helix" evidence="15">
    <location>
        <begin position="63"/>
        <end position="78"/>
    </location>
</feature>
<feature type="strand" evidence="15">
    <location>
        <begin position="84"/>
        <end position="88"/>
    </location>
</feature>
<feature type="strand" evidence="15">
    <location>
        <begin position="91"/>
        <end position="95"/>
    </location>
</feature>
<feature type="helix" evidence="15">
    <location>
        <begin position="100"/>
        <end position="103"/>
    </location>
</feature>
<feature type="helix" evidence="15">
    <location>
        <begin position="108"/>
        <end position="113"/>
    </location>
</feature>
<feature type="helix" evidence="15">
    <location>
        <begin position="119"/>
        <end position="125"/>
    </location>
</feature>
<feature type="strand" evidence="15">
    <location>
        <begin position="130"/>
        <end position="134"/>
    </location>
</feature>
<feature type="strand" evidence="15">
    <location>
        <begin position="136"/>
        <end position="139"/>
    </location>
</feature>
<feature type="helix" evidence="15">
    <location>
        <begin position="141"/>
        <end position="148"/>
    </location>
</feature>
<feature type="strand" evidence="15">
    <location>
        <begin position="149"/>
        <end position="155"/>
    </location>
</feature>
<feature type="strand" evidence="15">
    <location>
        <begin position="159"/>
        <end position="161"/>
    </location>
</feature>
<feature type="helix" evidence="15">
    <location>
        <begin position="163"/>
        <end position="167"/>
    </location>
</feature>
<feature type="turn" evidence="15">
    <location>
        <begin position="175"/>
        <end position="177"/>
    </location>
</feature>
<feature type="helix" evidence="15">
    <location>
        <begin position="178"/>
        <end position="183"/>
    </location>
</feature>
<feature type="helix" evidence="15">
    <location>
        <begin position="185"/>
        <end position="194"/>
    </location>
</feature>
<feature type="strand" evidence="16">
    <location>
        <begin position="197"/>
        <end position="199"/>
    </location>
</feature>
<feature type="helix" evidence="15">
    <location>
        <begin position="200"/>
        <end position="205"/>
    </location>
</feature>
<feature type="strand" evidence="15">
    <location>
        <begin position="210"/>
        <end position="213"/>
    </location>
</feature>
<feature type="turn" evidence="15">
    <location>
        <begin position="215"/>
        <end position="217"/>
    </location>
</feature>
<feature type="helix" evidence="15">
    <location>
        <begin position="218"/>
        <end position="231"/>
    </location>
</feature>
<feature type="helix" evidence="15">
    <location>
        <begin position="234"/>
        <end position="245"/>
    </location>
</feature>
<feature type="helix" evidence="15">
    <location>
        <begin position="246"/>
        <end position="248"/>
    </location>
</feature>
<feature type="helix" evidence="15">
    <location>
        <begin position="252"/>
        <end position="265"/>
    </location>
</feature>
<feature type="helix" evidence="15">
    <location>
        <begin position="266"/>
        <end position="268"/>
    </location>
</feature>
<feature type="helix" evidence="15">
    <location>
        <begin position="270"/>
        <end position="280"/>
    </location>
</feature>
<sequence>MAALRALLPRACNSLLSPVRCPEFRRFASGANFQYIITEKKGKNSSVGLIQLNRPKALNALCNGLIEELNQALETFEEDPAVGAIVLTGGEKAFAAGADIKEMQNRTFQDCYSGKFLSHWDHITRIKKPVIAAVNGYALGGGCELAMMCDIIYAGEKAQFGQPEILLGTIPGAGGTQRLTRAVGKSLAMEMVLTGDRISAQDAKQAGLVSKIFPVETLVEEAIQCAEKIANNSKIIVAMAKESVNAAFEMTLTEGNKLEKKLFYSTFATDDRREGMSAFVEKRKANFKDH</sequence>
<accession>P14604</accession>
<proteinExistence type="evidence at protein level"/>
<keyword id="KW-0002">3D-structure</keyword>
<keyword id="KW-0007">Acetylation</keyword>
<keyword id="KW-0903">Direct protein sequencing</keyword>
<keyword id="KW-0276">Fatty acid metabolism</keyword>
<keyword id="KW-0413">Isomerase</keyword>
<keyword id="KW-0443">Lipid metabolism</keyword>
<keyword id="KW-0456">Lyase</keyword>
<keyword id="KW-0496">Mitochondrion</keyword>
<keyword id="KW-1185">Reference proteome</keyword>
<keyword id="KW-0809">Transit peptide</keyword>
<name>ECHM_RAT</name>
<organism>
    <name type="scientific">Rattus norvegicus</name>
    <name type="common">Rat</name>
    <dbReference type="NCBI Taxonomy" id="10116"/>
    <lineage>
        <taxon>Eukaryota</taxon>
        <taxon>Metazoa</taxon>
        <taxon>Chordata</taxon>
        <taxon>Craniata</taxon>
        <taxon>Vertebrata</taxon>
        <taxon>Euteleostomi</taxon>
        <taxon>Mammalia</taxon>
        <taxon>Eutheria</taxon>
        <taxon>Euarchontoglires</taxon>
        <taxon>Glires</taxon>
        <taxon>Rodentia</taxon>
        <taxon>Myomorpha</taxon>
        <taxon>Muroidea</taxon>
        <taxon>Muridae</taxon>
        <taxon>Murinae</taxon>
        <taxon>Rattus</taxon>
    </lineage>
</organism>
<comment type="function">
    <text evidence="1 3 7">Converts unsaturated trans-2-enoyl-CoA species ((2E)-enoyl-CoA) to the corresponding 3(S)-3-hydroxyacyl-CoA species through addition of a water molecule to the double bond (PubMed:10074351, PubMed:7883013). Catalyzes the hydration of medium- and short-chained fatty enoyl-CoA thioesters from 4 carbons long (C4) up to C16 (PubMed:10074351, PubMed:7883013). Has high substrate specificity for crotonyl-CoA ((2E)-butenoyl-CoA) and moderate specificity for acryloyl-CoA, 3-methylcrotonyl-CoA (3-methyl-(2E)-butenoyl-CoA) and methacrylyl-CoA ((2E)-2-methylpropenoyl-CoA). Can bind tiglyl-CoA (2-methylcrotonoyl-CoA), but hydrates only a small amount of this substrate (By similarity). Plays a key role in the beta-oxidation spiral of short- and medium-chain fatty acid oxidation (PubMed:7883013). At a lower rate than the hydratase reaction, catalyzes the isomerase reaction of trans-3-enoyl-CoA species (such as (3E)-hexenoyl-CoA) to trans-2-enoyl-CoA species (such as (2E)-hexenoyl-CoA), which are subsequently hydrated to 3(S)-3-hydroxyacyl-CoA species (such as (3S)-hydroxyhexanoyl-CoA) (PubMed:10074351).</text>
</comment>
<comment type="catalytic activity">
    <reaction evidence="3 7">
        <text>a (3S)-3-hydroxyacyl-CoA = a (2E)-enoyl-CoA + H2O</text>
        <dbReference type="Rhea" id="RHEA:16105"/>
        <dbReference type="ChEBI" id="CHEBI:15377"/>
        <dbReference type="ChEBI" id="CHEBI:57318"/>
        <dbReference type="ChEBI" id="CHEBI:58856"/>
        <dbReference type="EC" id="4.2.1.17"/>
    </reaction>
    <physiologicalReaction direction="right-to-left" evidence="12 13">
        <dbReference type="Rhea" id="RHEA:16107"/>
    </physiologicalReaction>
</comment>
<comment type="catalytic activity">
    <reaction evidence="3">
        <text>a (3E)-enoyl-CoA = a 4-saturated (2E)-enoyl-CoA</text>
        <dbReference type="Rhea" id="RHEA:45228"/>
        <dbReference type="ChEBI" id="CHEBI:58521"/>
        <dbReference type="ChEBI" id="CHEBI:85097"/>
        <dbReference type="EC" id="5.3.3.8"/>
    </reaction>
    <physiologicalReaction direction="left-to-right" evidence="12">
        <dbReference type="Rhea" id="RHEA:45229"/>
    </physiologicalReaction>
</comment>
<comment type="catalytic activity">
    <reaction evidence="3">
        <text>(3E)-hexenoyl-CoA = (2E)-hexenoyl-CoA</text>
        <dbReference type="Rhea" id="RHEA:45736"/>
        <dbReference type="ChEBI" id="CHEBI:62077"/>
        <dbReference type="ChEBI" id="CHEBI:84790"/>
    </reaction>
    <physiologicalReaction direction="left-to-right" evidence="12">
        <dbReference type="Rhea" id="RHEA:45737"/>
    </physiologicalReaction>
</comment>
<comment type="catalytic activity">
    <reaction evidence="7">
        <text>(3S)-3-hydroxybutanoyl-CoA = (2E)-butenoyl-CoA + H2O</text>
        <dbReference type="Rhea" id="RHEA:26558"/>
        <dbReference type="ChEBI" id="CHEBI:15377"/>
        <dbReference type="ChEBI" id="CHEBI:57316"/>
        <dbReference type="ChEBI" id="CHEBI:57332"/>
    </reaction>
    <physiologicalReaction direction="right-to-left" evidence="13">
        <dbReference type="Rhea" id="RHEA:26560"/>
    </physiologicalReaction>
</comment>
<comment type="catalytic activity">
    <reaction evidence="1">
        <text>3-hydroxyisovaleryl-CoA = 3-methylbut-2-enoyl-CoA + H2O</text>
        <dbReference type="Rhea" id="RHEA:31079"/>
        <dbReference type="ChEBI" id="CHEBI:15377"/>
        <dbReference type="ChEBI" id="CHEBI:57344"/>
        <dbReference type="ChEBI" id="CHEBI:62555"/>
    </reaction>
    <physiologicalReaction direction="right-to-left" evidence="1">
        <dbReference type="Rhea" id="RHEA:31081"/>
    </physiologicalReaction>
</comment>
<comment type="catalytic activity">
    <reaction evidence="1">
        <text>3-hydroxypropanoyl-CoA = acryloyl-CoA + H2O</text>
        <dbReference type="Rhea" id="RHEA:26518"/>
        <dbReference type="ChEBI" id="CHEBI:15377"/>
        <dbReference type="ChEBI" id="CHEBI:57367"/>
        <dbReference type="ChEBI" id="CHEBI:58528"/>
    </reaction>
    <physiologicalReaction direction="right-to-left" evidence="1">
        <dbReference type="Rhea" id="RHEA:26520"/>
    </physiologicalReaction>
</comment>
<comment type="catalytic activity">
    <reaction evidence="1">
        <text>3-hydroxybutanoyl-CoA = (2E)-butenoyl-CoA + H2O</text>
        <dbReference type="Rhea" id="RHEA:45584"/>
        <dbReference type="ChEBI" id="CHEBI:15377"/>
        <dbReference type="ChEBI" id="CHEBI:57332"/>
        <dbReference type="ChEBI" id="CHEBI:78611"/>
    </reaction>
    <physiologicalReaction direction="right-to-left" evidence="1">
        <dbReference type="Rhea" id="RHEA:45586"/>
    </physiologicalReaction>
</comment>
<comment type="catalytic activity">
    <reaction evidence="1">
        <text>2-methylpropenoyl-CoA + H2O = (S)-3-hydroxyisobutanoyl-CoA</text>
        <dbReference type="Rhea" id="RHEA:31175"/>
        <dbReference type="ChEBI" id="CHEBI:15377"/>
        <dbReference type="ChEBI" id="CHEBI:62500"/>
        <dbReference type="ChEBI" id="CHEBI:62611"/>
    </reaction>
    <physiologicalReaction direction="left-to-right" evidence="1">
        <dbReference type="Rhea" id="RHEA:31176"/>
    </physiologicalReaction>
</comment>
<comment type="catalytic activity">
    <reaction evidence="3">
        <text>(3S)-hydroxyhexanoyl-CoA = (2E)-hexenoyl-CoA + H2O</text>
        <dbReference type="Rhea" id="RHEA:30547"/>
        <dbReference type="ChEBI" id="CHEBI:15377"/>
        <dbReference type="ChEBI" id="CHEBI:62075"/>
        <dbReference type="ChEBI" id="CHEBI:62077"/>
    </reaction>
    <physiologicalReaction direction="right-to-left" evidence="12">
        <dbReference type="Rhea" id="RHEA:30549"/>
    </physiologicalReaction>
</comment>
<comment type="catalytic activity">
    <reaction evidence="3">
        <text>(3S)-hydroxydecanoyl-CoA = (2E)-decenoyl-CoA + H2O</text>
        <dbReference type="Rhea" id="RHEA:31191"/>
        <dbReference type="ChEBI" id="CHEBI:15377"/>
        <dbReference type="ChEBI" id="CHEBI:61406"/>
        <dbReference type="ChEBI" id="CHEBI:62616"/>
    </reaction>
    <physiologicalReaction direction="right-to-left" evidence="12">
        <dbReference type="Rhea" id="RHEA:31193"/>
    </physiologicalReaction>
</comment>
<comment type="biophysicochemical properties">
    <kinetics>
        <KM evidence="3">25 uM for (2E)-hexenoyl-CoA</KM>
        <KM evidence="3">4.9 uM for (2E)-decenoyl-CoA</KM>
        <KM evidence="3">65.5 uM for (3E)-hexenoyl-CoA</KM>
        <KM evidence="3">49.9 uM for crotonyl-CoA ((2E)-butenoyl-CoA)</KM>
        <Vmax evidence="3">64.0 umol/min/mg enzyme using (2E)-hexenoyl-CoA as substrate</Vmax>
    </kinetics>
</comment>
<comment type="pathway">
    <text evidence="1">Lipid metabolism; fatty acid beta-oxidation.</text>
</comment>
<comment type="subunit">
    <text evidence="4 5 8 9">Homohexamer; dimer of trimers.</text>
</comment>
<comment type="subcellular location">
    <subcellularLocation>
        <location evidence="9">Mitochondrion matrix</location>
    </subcellularLocation>
</comment>
<comment type="tissue specificity">
    <text evidence="9">Detected in liver (at protein level).</text>
</comment>
<comment type="similarity">
    <text evidence="11">Belongs to the enoyl-CoA hydratase/isomerase family.</text>
</comment>